<keyword id="KW-0032">Aminotransferase</keyword>
<keyword id="KW-0963">Cytoplasm</keyword>
<keyword id="KW-0663">Pyridoxal phosphate</keyword>
<keyword id="KW-1185">Reference proteome</keyword>
<keyword id="KW-0808">Transferase</keyword>
<organism>
    <name type="scientific">Schizosaccharomyces pombe (strain 972 / ATCC 24843)</name>
    <name type="common">Fission yeast</name>
    <dbReference type="NCBI Taxonomy" id="284812"/>
    <lineage>
        <taxon>Eukaryota</taxon>
        <taxon>Fungi</taxon>
        <taxon>Dikarya</taxon>
        <taxon>Ascomycota</taxon>
        <taxon>Taphrinomycotina</taxon>
        <taxon>Schizosaccharomycetes</taxon>
        <taxon>Schizosaccharomycetales</taxon>
        <taxon>Schizosaccharomycetaceae</taxon>
        <taxon>Schizosaccharomyces</taxon>
    </lineage>
</organism>
<gene>
    <name type="ORF">SPCC569.07</name>
</gene>
<evidence type="ECO:0000250" key="1">
    <source>
        <dbReference type="UniProtKB" id="P00509"/>
    </source>
</evidence>
<evidence type="ECO:0000250" key="2">
    <source>
        <dbReference type="UniProtKB" id="P53090"/>
    </source>
</evidence>
<evidence type="ECO:0000255" key="3"/>
<evidence type="ECO:0000269" key="4">
    <source>
    </source>
</evidence>
<evidence type="ECO:0000305" key="5"/>
<evidence type="ECO:0000312" key="6">
    <source>
        <dbReference type="EMBL" id="CAB42068.1"/>
    </source>
</evidence>
<sequence>MDNLKKKYQHHLSLESASREYGPFQMLGRIQSDSDIKMLSFAGGEPNPSKFPIHKLSVSFPEVNSWEKDTNKDATVSYELSNNANEGSLDLLGALQYGQCQGIPELVKFIKDHVGQIHMPQYKDWDIKITNGNTIGLEYCLRLLVNRGDCILIEKYTYPAAITAMRPLGVKFIPIDMDENGMLPESFEKVMETWDSSLGARPHVLYTIPTGQNPTGSTLTLERRKKFLTLAKKYDIIIVEDEPYYFLQMEKYDANWKPDKQAFNISSFKKKLIPSLLHLDTDGRVLRVDSFSKLIVPGLRLGWITGNSLFIDRITRYAEVCTESPSGVSQVVLYAILNRWGQNGFLEWLQDLQNSYTMRRNALLLAADKHLPKSVCKYHSPKAGLFLWVELDKNRLICSNMDKSISEIEMEIFVELVNNGVKPVCGQLFMGEPNSADKIFFRFAYSLADLSTFEAGLERFTSTIQKYFQL</sequence>
<dbReference type="EC" id="2.6.1.57"/>
<dbReference type="EMBL" id="CU329672">
    <property type="protein sequence ID" value="CAB42068.1"/>
    <property type="molecule type" value="Genomic_DNA"/>
</dbReference>
<dbReference type="PIR" id="T41409">
    <property type="entry name" value="T41409"/>
</dbReference>
<dbReference type="RefSeq" id="NP_588566.1">
    <property type="nucleotide sequence ID" value="NM_001023553.2"/>
</dbReference>
<dbReference type="SMR" id="Q9Y7S6"/>
<dbReference type="BioGRID" id="275360">
    <property type="interactions" value="5"/>
</dbReference>
<dbReference type="FunCoup" id="Q9Y7S6">
    <property type="interactions" value="159"/>
</dbReference>
<dbReference type="STRING" id="284812.Q9Y7S6"/>
<dbReference type="iPTMnet" id="Q9Y7S6"/>
<dbReference type="PaxDb" id="4896-SPCC569.07.1"/>
<dbReference type="EnsemblFungi" id="SPCC569.07.1">
    <property type="protein sequence ID" value="SPCC569.07.1:pep"/>
    <property type="gene ID" value="SPCC569.07"/>
</dbReference>
<dbReference type="KEGG" id="spo:2538779"/>
<dbReference type="PomBase" id="SPCC569.07"/>
<dbReference type="VEuPathDB" id="FungiDB:SPCC569.07"/>
<dbReference type="eggNOG" id="KOG0634">
    <property type="taxonomic scope" value="Eukaryota"/>
</dbReference>
<dbReference type="HOGENOM" id="CLU_017584_0_5_1"/>
<dbReference type="InParanoid" id="Q9Y7S6"/>
<dbReference type="OMA" id="PYFFLRL"/>
<dbReference type="PhylomeDB" id="Q9Y7S6"/>
<dbReference type="Reactome" id="R-SPO-71064">
    <property type="pathway name" value="Lysine catabolism"/>
</dbReference>
<dbReference type="Reactome" id="R-SPO-71240">
    <property type="pathway name" value="Tryptophan catabolism"/>
</dbReference>
<dbReference type="PRO" id="PR:Q9Y7S6"/>
<dbReference type="Proteomes" id="UP000002485">
    <property type="component" value="Chromosome III"/>
</dbReference>
<dbReference type="GO" id="GO:0005829">
    <property type="term" value="C:cytosol"/>
    <property type="evidence" value="ECO:0007005"/>
    <property type="project" value="PomBase"/>
</dbReference>
<dbReference type="GO" id="GO:0005634">
    <property type="term" value="C:nucleus"/>
    <property type="evidence" value="ECO:0007005"/>
    <property type="project" value="PomBase"/>
</dbReference>
<dbReference type="GO" id="GO:0047536">
    <property type="term" value="F:2-aminoadipate transaminase activity"/>
    <property type="evidence" value="ECO:0000318"/>
    <property type="project" value="GO_Central"/>
</dbReference>
<dbReference type="GO" id="GO:0008793">
    <property type="term" value="F:aromatic-amino-acid transaminase activity"/>
    <property type="evidence" value="ECO:0000318"/>
    <property type="project" value="GO_Central"/>
</dbReference>
<dbReference type="GO" id="GO:0030170">
    <property type="term" value="F:pyridoxal phosphate binding"/>
    <property type="evidence" value="ECO:0007669"/>
    <property type="project" value="InterPro"/>
</dbReference>
<dbReference type="GO" id="GO:0009074">
    <property type="term" value="P:aromatic amino acid family catabolic process"/>
    <property type="evidence" value="ECO:0000318"/>
    <property type="project" value="GO_Central"/>
</dbReference>
<dbReference type="GO" id="GO:0019878">
    <property type="term" value="P:lysine biosynthetic process via aminoadipic acid"/>
    <property type="evidence" value="ECO:0000318"/>
    <property type="project" value="GO_Central"/>
</dbReference>
<dbReference type="GO" id="GO:0006571">
    <property type="term" value="P:tyrosine biosynthetic process"/>
    <property type="evidence" value="ECO:0000318"/>
    <property type="project" value="GO_Central"/>
</dbReference>
<dbReference type="CDD" id="cd00609">
    <property type="entry name" value="AAT_like"/>
    <property type="match status" value="1"/>
</dbReference>
<dbReference type="FunFam" id="3.40.640.10:FF:000074">
    <property type="entry name" value="Aromatic amino acid aminotransferase"/>
    <property type="match status" value="1"/>
</dbReference>
<dbReference type="Gene3D" id="3.40.640.10">
    <property type="entry name" value="Type I PLP-dependent aspartate aminotransferase-like (Major domain)"/>
    <property type="match status" value="1"/>
</dbReference>
<dbReference type="InterPro" id="IPR004839">
    <property type="entry name" value="Aminotransferase_I/II_large"/>
</dbReference>
<dbReference type="InterPro" id="IPR050859">
    <property type="entry name" value="Class-I_PLP-dep_aminotransf"/>
</dbReference>
<dbReference type="InterPro" id="IPR015424">
    <property type="entry name" value="PyrdxlP-dep_Trfase"/>
</dbReference>
<dbReference type="InterPro" id="IPR015421">
    <property type="entry name" value="PyrdxlP-dep_Trfase_major"/>
</dbReference>
<dbReference type="PANTHER" id="PTHR42790">
    <property type="entry name" value="AMINOTRANSFERASE"/>
    <property type="match status" value="1"/>
</dbReference>
<dbReference type="PANTHER" id="PTHR42790:SF21">
    <property type="entry name" value="AROMATIC_AMINOADIPATE AMINOTRANSFERASE 1"/>
    <property type="match status" value="1"/>
</dbReference>
<dbReference type="Pfam" id="PF00155">
    <property type="entry name" value="Aminotran_1_2"/>
    <property type="match status" value="1"/>
</dbReference>
<dbReference type="SUPFAM" id="SSF53383">
    <property type="entry name" value="PLP-dependent transferases"/>
    <property type="match status" value="1"/>
</dbReference>
<protein>
    <recommendedName>
        <fullName>Aromatic amino acid aminotransferase C569.07</fullName>
        <ecNumber>2.6.1.57</ecNumber>
    </recommendedName>
</protein>
<proteinExistence type="inferred from homology"/>
<accession>Q9Y7S6</accession>
<name>AATR3_SCHPO</name>
<reference evidence="6" key="1">
    <citation type="journal article" date="2002" name="Nature">
        <title>The genome sequence of Schizosaccharomyces pombe.</title>
        <authorList>
            <person name="Wood V."/>
            <person name="Gwilliam R."/>
            <person name="Rajandream M.A."/>
            <person name="Lyne M.H."/>
            <person name="Lyne R."/>
            <person name="Stewart A."/>
            <person name="Sgouros J.G."/>
            <person name="Peat N."/>
            <person name="Hayles J."/>
            <person name="Baker S.G."/>
            <person name="Basham D."/>
            <person name="Bowman S."/>
            <person name="Brooks K."/>
            <person name="Brown D."/>
            <person name="Brown S."/>
            <person name="Chillingworth T."/>
            <person name="Churcher C.M."/>
            <person name="Collins M."/>
            <person name="Connor R."/>
            <person name="Cronin A."/>
            <person name="Davis P."/>
            <person name="Feltwell T."/>
            <person name="Fraser A."/>
            <person name="Gentles S."/>
            <person name="Goble A."/>
            <person name="Hamlin N."/>
            <person name="Harris D.E."/>
            <person name="Hidalgo J."/>
            <person name="Hodgson G."/>
            <person name="Holroyd S."/>
            <person name="Hornsby T."/>
            <person name="Howarth S."/>
            <person name="Huckle E.J."/>
            <person name="Hunt S."/>
            <person name="Jagels K."/>
            <person name="James K.D."/>
            <person name="Jones L."/>
            <person name="Jones M."/>
            <person name="Leather S."/>
            <person name="McDonald S."/>
            <person name="McLean J."/>
            <person name="Mooney P."/>
            <person name="Moule S."/>
            <person name="Mungall K.L."/>
            <person name="Murphy L.D."/>
            <person name="Niblett D."/>
            <person name="Odell C."/>
            <person name="Oliver K."/>
            <person name="O'Neil S."/>
            <person name="Pearson D."/>
            <person name="Quail M.A."/>
            <person name="Rabbinowitsch E."/>
            <person name="Rutherford K.M."/>
            <person name="Rutter S."/>
            <person name="Saunders D."/>
            <person name="Seeger K."/>
            <person name="Sharp S."/>
            <person name="Skelton J."/>
            <person name="Simmonds M.N."/>
            <person name="Squares R."/>
            <person name="Squares S."/>
            <person name="Stevens K."/>
            <person name="Taylor K."/>
            <person name="Taylor R.G."/>
            <person name="Tivey A."/>
            <person name="Walsh S.V."/>
            <person name="Warren T."/>
            <person name="Whitehead S."/>
            <person name="Woodward J.R."/>
            <person name="Volckaert G."/>
            <person name="Aert R."/>
            <person name="Robben J."/>
            <person name="Grymonprez B."/>
            <person name="Weltjens I."/>
            <person name="Vanstreels E."/>
            <person name="Rieger M."/>
            <person name="Schaefer M."/>
            <person name="Mueller-Auer S."/>
            <person name="Gabel C."/>
            <person name="Fuchs M."/>
            <person name="Duesterhoeft A."/>
            <person name="Fritzc C."/>
            <person name="Holzer E."/>
            <person name="Moestl D."/>
            <person name="Hilbert H."/>
            <person name="Borzym K."/>
            <person name="Langer I."/>
            <person name="Beck A."/>
            <person name="Lehrach H."/>
            <person name="Reinhardt R."/>
            <person name="Pohl T.M."/>
            <person name="Eger P."/>
            <person name="Zimmermann W."/>
            <person name="Wedler H."/>
            <person name="Wambutt R."/>
            <person name="Purnelle B."/>
            <person name="Goffeau A."/>
            <person name="Cadieu E."/>
            <person name="Dreano S."/>
            <person name="Gloux S."/>
            <person name="Lelaure V."/>
            <person name="Mottier S."/>
            <person name="Galibert F."/>
            <person name="Aves S.J."/>
            <person name="Xiang Z."/>
            <person name="Hunt C."/>
            <person name="Moore K."/>
            <person name="Hurst S.M."/>
            <person name="Lucas M."/>
            <person name="Rochet M."/>
            <person name="Gaillardin C."/>
            <person name="Tallada V.A."/>
            <person name="Garzon A."/>
            <person name="Thode G."/>
            <person name="Daga R.R."/>
            <person name="Cruzado L."/>
            <person name="Jimenez J."/>
            <person name="Sanchez M."/>
            <person name="del Rey F."/>
            <person name="Benito J."/>
            <person name="Dominguez A."/>
            <person name="Revuelta J.L."/>
            <person name="Moreno S."/>
            <person name="Armstrong J."/>
            <person name="Forsburg S.L."/>
            <person name="Cerutti L."/>
            <person name="Lowe T."/>
            <person name="McCombie W.R."/>
            <person name="Paulsen I."/>
            <person name="Potashkin J."/>
            <person name="Shpakovski G.V."/>
            <person name="Ussery D."/>
            <person name="Barrell B.G."/>
            <person name="Nurse P."/>
        </authorList>
    </citation>
    <scope>NUCLEOTIDE SEQUENCE [LARGE SCALE GENOMIC DNA]</scope>
    <source>
        <strain>972 / ATCC 24843</strain>
    </source>
</reference>
<reference evidence="5" key="2">
    <citation type="journal article" date="2006" name="Nat. Biotechnol.">
        <title>ORFeome cloning and global analysis of protein localization in the fission yeast Schizosaccharomyces pombe.</title>
        <authorList>
            <person name="Matsuyama A."/>
            <person name="Arai R."/>
            <person name="Yashiroda Y."/>
            <person name="Shirai A."/>
            <person name="Kamata A."/>
            <person name="Sekido S."/>
            <person name="Kobayashi Y."/>
            <person name="Hashimoto A."/>
            <person name="Hamamoto M."/>
            <person name="Hiraoka Y."/>
            <person name="Horinouchi S."/>
            <person name="Yoshida M."/>
        </authorList>
    </citation>
    <scope>SUBCELLULAR LOCATION [LARGE SCALE ANALYSIS]</scope>
</reference>
<feature type="chain" id="PRO_0000308491" description="Aromatic amino acid aminotransferase C569.07">
    <location>
        <begin position="1"/>
        <end position="470"/>
    </location>
</feature>
<comment type="function">
    <text evidence="2">Has aromatic amino acid transaminase activity.</text>
</comment>
<comment type="catalytic activity">
    <reaction>
        <text>an aromatic L-alpha-amino acid + 2-oxoglutarate = an aromatic oxo-acid + L-glutamate</text>
        <dbReference type="Rhea" id="RHEA:17533"/>
        <dbReference type="ChEBI" id="CHEBI:16810"/>
        <dbReference type="ChEBI" id="CHEBI:29985"/>
        <dbReference type="ChEBI" id="CHEBI:73309"/>
        <dbReference type="ChEBI" id="CHEBI:84824"/>
        <dbReference type="EC" id="2.6.1.57"/>
    </reaction>
</comment>
<comment type="cofactor">
    <cofactor evidence="1">
        <name>pyridoxal 5'-phosphate</name>
        <dbReference type="ChEBI" id="CHEBI:597326"/>
    </cofactor>
</comment>
<comment type="subcellular location">
    <subcellularLocation>
        <location evidence="4">Cytoplasm</location>
    </subcellularLocation>
</comment>
<comment type="similarity">
    <text evidence="3">Belongs to the class-I pyridoxal-phosphate-dependent aminotransferase family.</text>
</comment>